<keyword id="KW-0025">Alternative splicing</keyword>
<keyword id="KW-0256">Endoplasmic reticulum</keyword>
<keyword id="KW-0325">Glycoprotein</keyword>
<keyword id="KW-0472">Membrane</keyword>
<keyword id="KW-1185">Reference proteome</keyword>
<keyword id="KW-0735">Signal-anchor</keyword>
<keyword id="KW-0812">Transmembrane</keyword>
<keyword id="KW-1133">Transmembrane helix</keyword>
<feature type="chain" id="PRO_0000218945" description="Signal peptidase complex subunit 3A">
    <location>
        <begin position="1"/>
        <end position="167"/>
    </location>
</feature>
<feature type="topological domain" description="Cytoplasmic" evidence="1">
    <location>
        <begin position="1"/>
        <end position="11"/>
    </location>
</feature>
<feature type="transmembrane region" description="Helical; Signal-anchor for type II membrane protein" evidence="4">
    <location>
        <begin position="12"/>
        <end position="32"/>
    </location>
</feature>
<feature type="topological domain" description="Lumenal" evidence="1">
    <location>
        <begin position="33"/>
        <end position="167"/>
    </location>
</feature>
<feature type="glycosylation site" description="N-linked (GlcNAc...) asparagine" evidence="4">
    <location>
        <position position="136"/>
    </location>
</feature>
<organism>
    <name type="scientific">Arabidopsis thaliana</name>
    <name type="common">Mouse-ear cress</name>
    <dbReference type="NCBI Taxonomy" id="3702"/>
    <lineage>
        <taxon>Eukaryota</taxon>
        <taxon>Viridiplantae</taxon>
        <taxon>Streptophyta</taxon>
        <taxon>Embryophyta</taxon>
        <taxon>Tracheophyta</taxon>
        <taxon>Spermatophyta</taxon>
        <taxon>Magnoliopsida</taxon>
        <taxon>eudicotyledons</taxon>
        <taxon>Gunneridae</taxon>
        <taxon>Pentapetalae</taxon>
        <taxon>rosids</taxon>
        <taxon>malvids</taxon>
        <taxon>Brassicales</taxon>
        <taxon>Brassicaceae</taxon>
        <taxon>Camelineae</taxon>
        <taxon>Arabidopsis</taxon>
    </lineage>
</organism>
<evidence type="ECO:0000250" key="1">
    <source>
        <dbReference type="UniProtKB" id="P61008"/>
    </source>
</evidence>
<evidence type="ECO:0000250" key="2">
    <source>
        <dbReference type="UniProtKB" id="P61009"/>
    </source>
</evidence>
<evidence type="ECO:0000250" key="3">
    <source>
        <dbReference type="UniProtKB" id="Q12133"/>
    </source>
</evidence>
<evidence type="ECO:0000255" key="4"/>
<evidence type="ECO:0000305" key="5"/>
<protein>
    <recommendedName>
        <fullName>Signal peptidase complex subunit 3A</fullName>
    </recommendedName>
    <alternativeName>
        <fullName>Microsomal signal peptidase 22 kDa subunit</fullName>
        <shortName>SPC22</shortName>
        <shortName>SPase 22 kDa subunit</shortName>
    </alternativeName>
</protein>
<name>SPC3A_ARATH</name>
<proteinExistence type="evidence at transcript level"/>
<comment type="function">
    <text evidence="2 3">Essential component of the signal peptidase complex (SPC) which catalyzes the cleavage of N-terminal signal sequences from nascent proteins as they are translocated into the lumen of the endoplasmic reticulum (By similarity). Essential for the SPC catalytic activity, possibly by stabilizing and positioning the active center of the complex close to the lumenal surface (By similarity).</text>
</comment>
<comment type="subunit">
    <text evidence="2">Component of the signal peptidase complex (SPC) composed of a catalytic subunit SEC11 and three accessory subunits SPCS1, SPCS2 and SPCS3. The complex induces a local thinning of the ER membrane which is used to measure the length of the signal peptide (SP) h-region of protein substrates. This ensures the selectivity of the complex towards h-regions shorter than 18-20 amino acids.</text>
</comment>
<comment type="subcellular location">
    <subcellularLocation>
        <location evidence="1">Endoplasmic reticulum membrane</location>
        <topology evidence="1">Single-pass type II membrane protein</topology>
    </subcellularLocation>
</comment>
<comment type="alternative products">
    <event type="alternative splicing"/>
    <isoform>
        <id>Q9MA96-1</id>
        <name>1</name>
        <sequence type="displayed"/>
    </isoform>
    <text>A number of isoforms are produced. According to EST sequences.</text>
</comment>
<comment type="similarity">
    <text evidence="5">Belongs to the SPCS3 family.</text>
</comment>
<accession>Q9MA96</accession>
<accession>O65203</accession>
<accession>Q0WTA7</accession>
<sequence>MHTFGYRANALLTFAVTALAFICAIASFSDKFSNQNPSAEIQILNINRFKKQSHGNDEVSLTLDISADLQSLFTWNTKQVFVFVAAEYETPKNSLNQVSLWDAIIPAKEHAKFRIQVSNKYRFIDQGQNLRGKDFNLTLHWHVMPKTGKMFADKIVLPGYSLPDAYR</sequence>
<gene>
    <name type="ordered locus">At3g05230</name>
    <name type="ORF">T12H1.20</name>
</gene>
<dbReference type="EMBL" id="AC009177">
    <property type="protein sequence ID" value="AAF27029.1"/>
    <property type="molecule type" value="Genomic_DNA"/>
</dbReference>
<dbReference type="EMBL" id="CP002686">
    <property type="protein sequence ID" value="AEE74208.1"/>
    <property type="molecule type" value="Genomic_DNA"/>
</dbReference>
<dbReference type="EMBL" id="BT009713">
    <property type="protein sequence ID" value="AAP88347.1"/>
    <property type="molecule type" value="mRNA"/>
</dbReference>
<dbReference type="EMBL" id="AK227654">
    <property type="protein sequence ID" value="BAE99641.1"/>
    <property type="molecule type" value="mRNA"/>
</dbReference>
<dbReference type="EMBL" id="AY085431">
    <property type="protein sequence ID" value="AAM62658.1"/>
    <property type="molecule type" value="mRNA"/>
</dbReference>
<dbReference type="PIR" id="T52119">
    <property type="entry name" value="T52119"/>
</dbReference>
<dbReference type="RefSeq" id="NP_566250.1">
    <molecule id="Q9MA96-1"/>
    <property type="nucleotide sequence ID" value="NM_111396.4"/>
</dbReference>
<dbReference type="SMR" id="Q9MA96"/>
<dbReference type="BioGRID" id="5022">
    <property type="interactions" value="1"/>
</dbReference>
<dbReference type="FunCoup" id="Q9MA96">
    <property type="interactions" value="2261"/>
</dbReference>
<dbReference type="STRING" id="3702.Q9MA96"/>
<dbReference type="GlyGen" id="Q9MA96">
    <property type="glycosylation" value="1 site"/>
</dbReference>
<dbReference type="PaxDb" id="3702-AT3G05230.1"/>
<dbReference type="ProteomicsDB" id="245191">
    <molecule id="Q9MA96-1"/>
</dbReference>
<dbReference type="EnsemblPlants" id="AT3G05230.1">
    <molecule id="Q9MA96-1"/>
    <property type="protein sequence ID" value="AT3G05230.1"/>
    <property type="gene ID" value="AT3G05230"/>
</dbReference>
<dbReference type="GeneID" id="819687"/>
<dbReference type="Gramene" id="AT3G05230.1">
    <molecule id="Q9MA96-1"/>
    <property type="protein sequence ID" value="AT3G05230.1"/>
    <property type="gene ID" value="AT3G05230"/>
</dbReference>
<dbReference type="KEGG" id="ath:AT3G05230"/>
<dbReference type="Araport" id="AT3G05230"/>
<dbReference type="TAIR" id="AT3G05230"/>
<dbReference type="eggNOG" id="KOG3372">
    <property type="taxonomic scope" value="Eukaryota"/>
</dbReference>
<dbReference type="HOGENOM" id="CLU_068714_1_0_1"/>
<dbReference type="InParanoid" id="Q9MA96"/>
<dbReference type="OMA" id="LAIMCIM"/>
<dbReference type="OrthoDB" id="10261524at2759"/>
<dbReference type="PhylomeDB" id="Q9MA96"/>
<dbReference type="PRO" id="PR:Q9MA96"/>
<dbReference type="Proteomes" id="UP000006548">
    <property type="component" value="Chromosome 3"/>
</dbReference>
<dbReference type="ExpressionAtlas" id="Q9MA96">
    <property type="expression patterns" value="baseline and differential"/>
</dbReference>
<dbReference type="GO" id="GO:0005783">
    <property type="term" value="C:endoplasmic reticulum"/>
    <property type="evidence" value="ECO:0007005"/>
    <property type="project" value="TAIR"/>
</dbReference>
<dbReference type="GO" id="GO:0009506">
    <property type="term" value="C:plasmodesma"/>
    <property type="evidence" value="ECO:0007005"/>
    <property type="project" value="TAIR"/>
</dbReference>
<dbReference type="GO" id="GO:0005787">
    <property type="term" value="C:signal peptidase complex"/>
    <property type="evidence" value="ECO:0007669"/>
    <property type="project" value="InterPro"/>
</dbReference>
<dbReference type="GO" id="GO:0006465">
    <property type="term" value="P:signal peptide processing"/>
    <property type="evidence" value="ECO:0007669"/>
    <property type="project" value="InterPro"/>
</dbReference>
<dbReference type="InterPro" id="IPR007653">
    <property type="entry name" value="SPC3"/>
</dbReference>
<dbReference type="PANTHER" id="PTHR12804">
    <property type="entry name" value="MICROSOMAL SIGNAL PEPTIDASE 23 KD SUBUNIT SPC22/23"/>
    <property type="match status" value="1"/>
</dbReference>
<dbReference type="PANTHER" id="PTHR12804:SF8">
    <property type="entry name" value="SIGNAL PEPTIDASE COMPLEX SUBUNIT 3A"/>
    <property type="match status" value="1"/>
</dbReference>
<dbReference type="Pfam" id="PF04573">
    <property type="entry name" value="SPC22"/>
    <property type="match status" value="1"/>
</dbReference>
<dbReference type="PIRSF" id="PIRSF016089">
    <property type="entry name" value="SPC22"/>
    <property type="match status" value="1"/>
</dbReference>
<reference key="1">
    <citation type="journal article" date="2000" name="Nature">
        <title>Sequence and analysis of chromosome 3 of the plant Arabidopsis thaliana.</title>
        <authorList>
            <person name="Salanoubat M."/>
            <person name="Lemcke K."/>
            <person name="Rieger M."/>
            <person name="Ansorge W."/>
            <person name="Unseld M."/>
            <person name="Fartmann B."/>
            <person name="Valle G."/>
            <person name="Bloecker H."/>
            <person name="Perez-Alonso M."/>
            <person name="Obermaier B."/>
            <person name="Delseny M."/>
            <person name="Boutry M."/>
            <person name="Grivell L.A."/>
            <person name="Mache R."/>
            <person name="Puigdomenech P."/>
            <person name="De Simone V."/>
            <person name="Choisne N."/>
            <person name="Artiguenave F."/>
            <person name="Robert C."/>
            <person name="Brottier P."/>
            <person name="Wincker P."/>
            <person name="Cattolico L."/>
            <person name="Weissenbach J."/>
            <person name="Saurin W."/>
            <person name="Quetier F."/>
            <person name="Schaefer M."/>
            <person name="Mueller-Auer S."/>
            <person name="Gabel C."/>
            <person name="Fuchs M."/>
            <person name="Benes V."/>
            <person name="Wurmbach E."/>
            <person name="Drzonek H."/>
            <person name="Erfle H."/>
            <person name="Jordan N."/>
            <person name="Bangert S."/>
            <person name="Wiedelmann R."/>
            <person name="Kranz H."/>
            <person name="Voss H."/>
            <person name="Holland R."/>
            <person name="Brandt P."/>
            <person name="Nyakatura G."/>
            <person name="Vezzi A."/>
            <person name="D'Angelo M."/>
            <person name="Pallavicini A."/>
            <person name="Toppo S."/>
            <person name="Simionati B."/>
            <person name="Conrad A."/>
            <person name="Hornischer K."/>
            <person name="Kauer G."/>
            <person name="Loehnert T.-H."/>
            <person name="Nordsiek G."/>
            <person name="Reichelt J."/>
            <person name="Scharfe M."/>
            <person name="Schoen O."/>
            <person name="Bargues M."/>
            <person name="Terol J."/>
            <person name="Climent J."/>
            <person name="Navarro P."/>
            <person name="Collado C."/>
            <person name="Perez-Perez A."/>
            <person name="Ottenwaelder B."/>
            <person name="Duchemin D."/>
            <person name="Cooke R."/>
            <person name="Laudie M."/>
            <person name="Berger-Llauro C."/>
            <person name="Purnelle B."/>
            <person name="Masuy D."/>
            <person name="de Haan M."/>
            <person name="Maarse A.C."/>
            <person name="Alcaraz J.-P."/>
            <person name="Cottet A."/>
            <person name="Casacuberta E."/>
            <person name="Monfort A."/>
            <person name="Argiriou A."/>
            <person name="Flores M."/>
            <person name="Liguori R."/>
            <person name="Vitale D."/>
            <person name="Mannhaupt G."/>
            <person name="Haase D."/>
            <person name="Schoof H."/>
            <person name="Rudd S."/>
            <person name="Zaccaria P."/>
            <person name="Mewes H.-W."/>
            <person name="Mayer K.F.X."/>
            <person name="Kaul S."/>
            <person name="Town C.D."/>
            <person name="Koo H.L."/>
            <person name="Tallon L.J."/>
            <person name="Jenkins J."/>
            <person name="Rooney T."/>
            <person name="Rizzo M."/>
            <person name="Walts A."/>
            <person name="Utterback T."/>
            <person name="Fujii C.Y."/>
            <person name="Shea T.P."/>
            <person name="Creasy T.H."/>
            <person name="Haas B."/>
            <person name="Maiti R."/>
            <person name="Wu D."/>
            <person name="Peterson J."/>
            <person name="Van Aken S."/>
            <person name="Pai G."/>
            <person name="Militscher J."/>
            <person name="Sellers P."/>
            <person name="Gill J.E."/>
            <person name="Feldblyum T.V."/>
            <person name="Preuss D."/>
            <person name="Lin X."/>
            <person name="Nierman W.C."/>
            <person name="Salzberg S.L."/>
            <person name="White O."/>
            <person name="Venter J.C."/>
            <person name="Fraser C.M."/>
            <person name="Kaneko T."/>
            <person name="Nakamura Y."/>
            <person name="Sato S."/>
            <person name="Kato T."/>
            <person name="Asamizu E."/>
            <person name="Sasamoto S."/>
            <person name="Kimura T."/>
            <person name="Idesawa K."/>
            <person name="Kawashima K."/>
            <person name="Kishida Y."/>
            <person name="Kiyokawa C."/>
            <person name="Kohara M."/>
            <person name="Matsumoto M."/>
            <person name="Matsuno A."/>
            <person name="Muraki A."/>
            <person name="Nakayama S."/>
            <person name="Nakazaki N."/>
            <person name="Shinpo S."/>
            <person name="Takeuchi C."/>
            <person name="Wada T."/>
            <person name="Watanabe A."/>
            <person name="Yamada M."/>
            <person name="Yasuda M."/>
            <person name="Tabata S."/>
        </authorList>
    </citation>
    <scope>NUCLEOTIDE SEQUENCE [LARGE SCALE GENOMIC DNA]</scope>
    <source>
        <strain>cv. Columbia</strain>
    </source>
</reference>
<reference key="2">
    <citation type="journal article" date="2017" name="Plant J.">
        <title>Araport11: a complete reannotation of the Arabidopsis thaliana reference genome.</title>
        <authorList>
            <person name="Cheng C.Y."/>
            <person name="Krishnakumar V."/>
            <person name="Chan A.P."/>
            <person name="Thibaud-Nissen F."/>
            <person name="Schobel S."/>
            <person name="Town C.D."/>
        </authorList>
    </citation>
    <scope>GENOME REANNOTATION</scope>
    <source>
        <strain>cv. Columbia</strain>
    </source>
</reference>
<reference key="3">
    <citation type="journal article" date="2003" name="Science">
        <title>Empirical analysis of transcriptional activity in the Arabidopsis genome.</title>
        <authorList>
            <person name="Yamada K."/>
            <person name="Lim J."/>
            <person name="Dale J.M."/>
            <person name="Chen H."/>
            <person name="Shinn P."/>
            <person name="Palm C.J."/>
            <person name="Southwick A.M."/>
            <person name="Wu H.C."/>
            <person name="Kim C.J."/>
            <person name="Nguyen M."/>
            <person name="Pham P.K."/>
            <person name="Cheuk R.F."/>
            <person name="Karlin-Newmann G."/>
            <person name="Liu S.X."/>
            <person name="Lam B."/>
            <person name="Sakano H."/>
            <person name="Wu T."/>
            <person name="Yu G."/>
            <person name="Miranda M."/>
            <person name="Quach H.L."/>
            <person name="Tripp M."/>
            <person name="Chang C.H."/>
            <person name="Lee J.M."/>
            <person name="Toriumi M.J."/>
            <person name="Chan M.M."/>
            <person name="Tang C.C."/>
            <person name="Onodera C.S."/>
            <person name="Deng J.M."/>
            <person name="Akiyama K."/>
            <person name="Ansari Y."/>
            <person name="Arakawa T."/>
            <person name="Banh J."/>
            <person name="Banno F."/>
            <person name="Bowser L."/>
            <person name="Brooks S.Y."/>
            <person name="Carninci P."/>
            <person name="Chao Q."/>
            <person name="Choy N."/>
            <person name="Enju A."/>
            <person name="Goldsmith A.D."/>
            <person name="Gurjal M."/>
            <person name="Hansen N.F."/>
            <person name="Hayashizaki Y."/>
            <person name="Johnson-Hopson C."/>
            <person name="Hsuan V.W."/>
            <person name="Iida K."/>
            <person name="Karnes M."/>
            <person name="Khan S."/>
            <person name="Koesema E."/>
            <person name="Ishida J."/>
            <person name="Jiang P.X."/>
            <person name="Jones T."/>
            <person name="Kawai J."/>
            <person name="Kamiya A."/>
            <person name="Meyers C."/>
            <person name="Nakajima M."/>
            <person name="Narusaka M."/>
            <person name="Seki M."/>
            <person name="Sakurai T."/>
            <person name="Satou M."/>
            <person name="Tamse R."/>
            <person name="Vaysberg M."/>
            <person name="Wallender E.K."/>
            <person name="Wong C."/>
            <person name="Yamamura Y."/>
            <person name="Yuan S."/>
            <person name="Shinozaki K."/>
            <person name="Davis R.W."/>
            <person name="Theologis A."/>
            <person name="Ecker J.R."/>
        </authorList>
    </citation>
    <scope>NUCLEOTIDE SEQUENCE [LARGE SCALE MRNA]</scope>
    <source>
        <strain>cv. Columbia</strain>
    </source>
</reference>
<reference key="4">
    <citation type="submission" date="2006-07" db="EMBL/GenBank/DDBJ databases">
        <title>Large-scale analysis of RIKEN Arabidopsis full-length (RAFL) cDNAs.</title>
        <authorList>
            <person name="Totoki Y."/>
            <person name="Seki M."/>
            <person name="Ishida J."/>
            <person name="Nakajima M."/>
            <person name="Enju A."/>
            <person name="Kamiya A."/>
            <person name="Narusaka M."/>
            <person name="Shin-i T."/>
            <person name="Nakagawa M."/>
            <person name="Sakamoto N."/>
            <person name="Oishi K."/>
            <person name="Kohara Y."/>
            <person name="Kobayashi M."/>
            <person name="Toyoda A."/>
            <person name="Sakaki Y."/>
            <person name="Sakurai T."/>
            <person name="Iida K."/>
            <person name="Akiyama K."/>
            <person name="Satou M."/>
            <person name="Toyoda T."/>
            <person name="Konagaya A."/>
            <person name="Carninci P."/>
            <person name="Kawai J."/>
            <person name="Hayashizaki Y."/>
            <person name="Shinozaki K."/>
        </authorList>
    </citation>
    <scope>NUCLEOTIDE SEQUENCE [LARGE SCALE MRNA]</scope>
    <source>
        <strain>cv. Columbia</strain>
    </source>
</reference>
<reference key="5">
    <citation type="submission" date="2002-03" db="EMBL/GenBank/DDBJ databases">
        <title>Full-length cDNA from Arabidopsis thaliana.</title>
        <authorList>
            <person name="Brover V.V."/>
            <person name="Troukhan M.E."/>
            <person name="Alexandrov N.A."/>
            <person name="Lu Y.-P."/>
            <person name="Flavell R.B."/>
            <person name="Feldmann K.A."/>
        </authorList>
    </citation>
    <scope>NUCLEOTIDE SEQUENCE [LARGE SCALE MRNA]</scope>
</reference>